<organism>
    <name type="scientific">Mus musculus</name>
    <name type="common">Mouse</name>
    <dbReference type="NCBI Taxonomy" id="10090"/>
    <lineage>
        <taxon>Eukaryota</taxon>
        <taxon>Metazoa</taxon>
        <taxon>Chordata</taxon>
        <taxon>Craniata</taxon>
        <taxon>Vertebrata</taxon>
        <taxon>Euteleostomi</taxon>
        <taxon>Mammalia</taxon>
        <taxon>Eutheria</taxon>
        <taxon>Euarchontoglires</taxon>
        <taxon>Glires</taxon>
        <taxon>Rodentia</taxon>
        <taxon>Myomorpha</taxon>
        <taxon>Muroidea</taxon>
        <taxon>Muridae</taxon>
        <taxon>Murinae</taxon>
        <taxon>Mus</taxon>
        <taxon>Mus</taxon>
    </lineage>
</organism>
<name>DPPA3_MOUSE</name>
<evidence type="ECO:0000256" key="1">
    <source>
        <dbReference type="SAM" id="MobiDB-lite"/>
    </source>
</evidence>
<evidence type="ECO:0000269" key="2">
    <source>
    </source>
</evidence>
<evidence type="ECO:0000269" key="3">
    <source>
    </source>
</evidence>
<evidence type="ECO:0000269" key="4">
    <source>
    </source>
</evidence>
<evidence type="ECO:0000269" key="5">
    <source>
    </source>
</evidence>
<evidence type="ECO:0000269" key="6">
    <source>
    </source>
</evidence>
<evidence type="ECO:0000269" key="7">
    <source>
    </source>
</evidence>
<evidence type="ECO:0000269" key="8">
    <source>
    </source>
</evidence>
<evidence type="ECO:0000269" key="9">
    <source>
    </source>
</evidence>
<evidence type="ECO:0000269" key="10">
    <source>
    </source>
</evidence>
<evidence type="ECO:0000269" key="11">
    <source>
    </source>
</evidence>
<evidence type="ECO:0000303" key="12">
    <source>
    </source>
</evidence>
<evidence type="ECO:0000303" key="13">
    <source>
    </source>
</evidence>
<evidence type="ECO:0007829" key="14">
    <source>
        <dbReference type="PDB" id="8XV6"/>
    </source>
</evidence>
<dbReference type="EMBL" id="AY082485">
    <property type="protein sequence ID" value="AAM03317.1"/>
    <property type="molecule type" value="mRNA"/>
</dbReference>
<dbReference type="EMBL" id="AB072734">
    <property type="protein sequence ID" value="BAB86304.1"/>
    <property type="molecule type" value="mRNA"/>
</dbReference>
<dbReference type="EMBL" id="AF490347">
    <property type="protein sequence ID" value="AAO84505.1"/>
    <property type="molecule type" value="mRNA"/>
</dbReference>
<dbReference type="EMBL" id="AY134859">
    <property type="protein sequence ID" value="AAN12283.1"/>
    <property type="molecule type" value="mRNA"/>
</dbReference>
<dbReference type="EMBL" id="AK135769">
    <property type="protein sequence ID" value="BAE22650.1"/>
    <property type="molecule type" value="mRNA"/>
</dbReference>
<dbReference type="EMBL" id="AK136263">
    <property type="protein sequence ID" value="BAE22904.1"/>
    <property type="molecule type" value="mRNA"/>
</dbReference>
<dbReference type="EMBL" id="AC158651">
    <property type="status" value="NOT_ANNOTATED_CDS"/>
    <property type="molecule type" value="Genomic_DNA"/>
</dbReference>
<dbReference type="EMBL" id="BC099433">
    <property type="protein sequence ID" value="AAH99433.1"/>
    <property type="molecule type" value="mRNA"/>
</dbReference>
<dbReference type="EMBL" id="BC100331">
    <property type="protein sequence ID" value="AAI00332.1"/>
    <property type="molecule type" value="mRNA"/>
</dbReference>
<dbReference type="EMBL" id="BC107340">
    <property type="protein sequence ID" value="AAI07341.1"/>
    <property type="molecule type" value="mRNA"/>
</dbReference>
<dbReference type="EMBL" id="BC107341">
    <property type="protein sequence ID" value="AAI07342.1"/>
    <property type="molecule type" value="mRNA"/>
</dbReference>
<dbReference type="CCDS" id="CCDS20500.1"/>
<dbReference type="RefSeq" id="NP_631964.1">
    <property type="nucleotide sequence ID" value="NM_139218.1"/>
</dbReference>
<dbReference type="PDB" id="7XGA">
    <property type="method" value="NMR"/>
    <property type="chains" value="A=76-127"/>
</dbReference>
<dbReference type="PDB" id="8XV4">
    <property type="method" value="X-ray"/>
    <property type="resolution" value="3.20 A"/>
    <property type="chains" value="C/D=85-119"/>
</dbReference>
<dbReference type="PDB" id="8XV6">
    <property type="method" value="X-ray"/>
    <property type="resolution" value="1.60 A"/>
    <property type="chains" value="B/D=85-119"/>
</dbReference>
<dbReference type="PDBsum" id="7XGA"/>
<dbReference type="PDBsum" id="8XV4"/>
<dbReference type="PDBsum" id="8XV6"/>
<dbReference type="SMR" id="Q8QZY3"/>
<dbReference type="BioGRID" id="216201">
    <property type="interactions" value="308"/>
</dbReference>
<dbReference type="DIP" id="DIP-59897N"/>
<dbReference type="FunCoup" id="Q8QZY3">
    <property type="interactions" value="180"/>
</dbReference>
<dbReference type="STRING" id="10090.ENSMUSP00000062832"/>
<dbReference type="iPTMnet" id="Q8QZY3"/>
<dbReference type="PhosphoSitePlus" id="Q8QZY3"/>
<dbReference type="PaxDb" id="10090-ENSMUSP00000062832"/>
<dbReference type="ProteomicsDB" id="277399"/>
<dbReference type="Antibodypedia" id="22960">
    <property type="antibodies" value="163 antibodies from 32 providers"/>
</dbReference>
<dbReference type="DNASU" id="73708"/>
<dbReference type="Ensembl" id="ENSMUST00000049644.9">
    <property type="protein sequence ID" value="ENSMUSP00000062832.3"/>
    <property type="gene ID" value="ENSMUSG00000046323.9"/>
</dbReference>
<dbReference type="GeneID" id="73708"/>
<dbReference type="KEGG" id="mmu:73708"/>
<dbReference type="UCSC" id="uc009dpn.1">
    <property type="organism name" value="mouse"/>
</dbReference>
<dbReference type="AGR" id="MGI:1920958"/>
<dbReference type="CTD" id="359787"/>
<dbReference type="MGI" id="MGI:1920958">
    <property type="gene designation" value="Dppa3"/>
</dbReference>
<dbReference type="VEuPathDB" id="HostDB:ENSMUSG00000046323"/>
<dbReference type="GeneTree" id="ENSGT00800000124303"/>
<dbReference type="HOGENOM" id="CLU_107188_1_0_1"/>
<dbReference type="InParanoid" id="Q8QZY3"/>
<dbReference type="OMA" id="GICCKAT"/>
<dbReference type="OrthoDB" id="9529981at2759"/>
<dbReference type="PhylomeDB" id="Q8QZY3"/>
<dbReference type="TreeFam" id="TF338511"/>
<dbReference type="BioGRID-ORCS" id="73708">
    <property type="hits" value="3 hits in 77 CRISPR screens"/>
</dbReference>
<dbReference type="ChiTaRS" id="Dppa3">
    <property type="organism name" value="mouse"/>
</dbReference>
<dbReference type="PRO" id="PR:Q8QZY3"/>
<dbReference type="Proteomes" id="UP000000589">
    <property type="component" value="Chromosome 6"/>
</dbReference>
<dbReference type="RNAct" id="Q8QZY3">
    <property type="molecule type" value="protein"/>
</dbReference>
<dbReference type="Bgee" id="ENSMUSG00000046323">
    <property type="expression patterns" value="Expressed in blastoderm cell in morula and 62 other cell types or tissues"/>
</dbReference>
<dbReference type="ExpressionAtlas" id="Q8QZY3">
    <property type="expression patterns" value="baseline and differential"/>
</dbReference>
<dbReference type="GO" id="GO:0000785">
    <property type="term" value="C:chromatin"/>
    <property type="evidence" value="ECO:0000314"/>
    <property type="project" value="GO_Central"/>
</dbReference>
<dbReference type="GO" id="GO:0005737">
    <property type="term" value="C:cytoplasm"/>
    <property type="evidence" value="ECO:0000314"/>
    <property type="project" value="UniProtKB"/>
</dbReference>
<dbReference type="GO" id="GO:0005829">
    <property type="term" value="C:cytosol"/>
    <property type="evidence" value="ECO:0000304"/>
    <property type="project" value="Reactome"/>
</dbReference>
<dbReference type="GO" id="GO:0001939">
    <property type="term" value="C:female pronucleus"/>
    <property type="evidence" value="ECO:0000314"/>
    <property type="project" value="UniProtKB"/>
</dbReference>
<dbReference type="GO" id="GO:0001940">
    <property type="term" value="C:male pronucleus"/>
    <property type="evidence" value="ECO:0000314"/>
    <property type="project" value="MGI"/>
</dbReference>
<dbReference type="GO" id="GO:0005654">
    <property type="term" value="C:nucleoplasm"/>
    <property type="evidence" value="ECO:0000304"/>
    <property type="project" value="Reactome"/>
</dbReference>
<dbReference type="GO" id="GO:0005634">
    <property type="term" value="C:nucleus"/>
    <property type="evidence" value="ECO:0000314"/>
    <property type="project" value="UniProtKB"/>
</dbReference>
<dbReference type="GO" id="GO:0062072">
    <property type="term" value="F:histone H3K9me2/3 reader activity"/>
    <property type="evidence" value="ECO:0000315"/>
    <property type="project" value="UniProtKB"/>
</dbReference>
<dbReference type="GO" id="GO:0035064">
    <property type="term" value="F:methylated histone binding"/>
    <property type="evidence" value="ECO:0007669"/>
    <property type="project" value="InterPro"/>
</dbReference>
<dbReference type="GO" id="GO:0040016">
    <property type="term" value="P:embryonic cleavage"/>
    <property type="evidence" value="ECO:0000315"/>
    <property type="project" value="MGI"/>
</dbReference>
<dbReference type="GO" id="GO:0044726">
    <property type="term" value="P:epigenetic programing of female pronucleus"/>
    <property type="evidence" value="ECO:0000314"/>
    <property type="project" value="GO_Central"/>
</dbReference>
<dbReference type="InterPro" id="IPR029096">
    <property type="entry name" value="Dppa3"/>
</dbReference>
<dbReference type="PANTHER" id="PTHR31577:SF2">
    <property type="entry name" value="DEVELOPMENTAL PLURIPOTENCY-ASSOCIATED PROTEIN 3"/>
    <property type="match status" value="1"/>
</dbReference>
<dbReference type="PANTHER" id="PTHR31577">
    <property type="entry name" value="DEVELOPMENTAL PLURIPOTENCY-ASSOCIATED PROTEIN 3-RELATED"/>
    <property type="match status" value="1"/>
</dbReference>
<dbReference type="Pfam" id="PF15549">
    <property type="entry name" value="PGC7_Stella"/>
    <property type="match status" value="1"/>
</dbReference>
<reference key="1">
    <citation type="journal article" date="2002" name="Nature">
        <title>A molecular programme for the specification of germ cell fate in mice.</title>
        <authorList>
            <person name="Saitou M."/>
            <person name="Barton S.C."/>
            <person name="Surani M.A."/>
        </authorList>
    </citation>
    <scope>NUCLEOTIDE SEQUENCE [MRNA]</scope>
    <scope>FUNCTION</scope>
    <scope>SUBCELLULAR LOCATION</scope>
    <scope>TISSUE SPECIFICITY</scope>
    <source>
        <strain>129/SvEv</strain>
    </source>
</reference>
<reference key="2">
    <citation type="journal article" date="2002" name="Mech. Dev.">
        <title>Identification of PGC7, a new gene expressed specifically in preimplantation embryos and germ cells.</title>
        <authorList>
            <person name="Sato M."/>
            <person name="Kimura T."/>
            <person name="Kurokawa K."/>
            <person name="Fujita Y."/>
            <person name="Abe K."/>
            <person name="Masuhara M."/>
            <person name="Yasunaga T."/>
            <person name="Ryo A."/>
            <person name="Yamamoto M."/>
            <person name="Nakano T."/>
        </authorList>
    </citation>
    <scope>NUCLEOTIDE SEQUENCE [MRNA]</scope>
    <scope>SUBCELLULAR LOCATION</scope>
    <scope>TISSUE SPECIFICITY</scope>
    <scope>DEVELOPMENTAL STAGE</scope>
</reference>
<reference key="3">
    <citation type="journal article" date="2003" name="Development">
        <title>Incomplete reactivation of Oct4-related genes in mouse embryos cloned from somatic nuclei.</title>
        <authorList>
            <person name="Bortvin A."/>
            <person name="Eggan K."/>
            <person name="Skaletsky H."/>
            <person name="Akutsu H."/>
            <person name="Berry D.L."/>
            <person name="Yanagimachi R."/>
            <person name="Page D.C."/>
            <person name="Jaenisch R."/>
        </authorList>
    </citation>
    <scope>NUCLEOTIDE SEQUENCE [MRNA]</scope>
    <scope>FUNCTION</scope>
    <scope>TISSUE SPECIFICITY</scope>
    <scope>DEVELOPMENTAL STAGE</scope>
</reference>
<reference key="4">
    <citation type="submission" date="2002-07" db="EMBL/GenBank/DDBJ databases">
        <authorList>
            <person name="Li W."/>
            <person name="Lu G."/>
        </authorList>
    </citation>
    <scope>NUCLEOTIDE SEQUENCE [MRNA]</scope>
    <source>
        <strain>KM</strain>
    </source>
</reference>
<reference key="5">
    <citation type="journal article" date="2005" name="Science">
        <title>The transcriptional landscape of the mammalian genome.</title>
        <authorList>
            <person name="Carninci P."/>
            <person name="Kasukawa T."/>
            <person name="Katayama S."/>
            <person name="Gough J."/>
            <person name="Frith M.C."/>
            <person name="Maeda N."/>
            <person name="Oyama R."/>
            <person name="Ravasi T."/>
            <person name="Lenhard B."/>
            <person name="Wells C."/>
            <person name="Kodzius R."/>
            <person name="Shimokawa K."/>
            <person name="Bajic V.B."/>
            <person name="Brenner S.E."/>
            <person name="Batalov S."/>
            <person name="Forrest A.R."/>
            <person name="Zavolan M."/>
            <person name="Davis M.J."/>
            <person name="Wilming L.G."/>
            <person name="Aidinis V."/>
            <person name="Allen J.E."/>
            <person name="Ambesi-Impiombato A."/>
            <person name="Apweiler R."/>
            <person name="Aturaliya R.N."/>
            <person name="Bailey T.L."/>
            <person name="Bansal M."/>
            <person name="Baxter L."/>
            <person name="Beisel K.W."/>
            <person name="Bersano T."/>
            <person name="Bono H."/>
            <person name="Chalk A.M."/>
            <person name="Chiu K.P."/>
            <person name="Choudhary V."/>
            <person name="Christoffels A."/>
            <person name="Clutterbuck D.R."/>
            <person name="Crowe M.L."/>
            <person name="Dalla E."/>
            <person name="Dalrymple B.P."/>
            <person name="de Bono B."/>
            <person name="Della Gatta G."/>
            <person name="di Bernardo D."/>
            <person name="Down T."/>
            <person name="Engstrom P."/>
            <person name="Fagiolini M."/>
            <person name="Faulkner G."/>
            <person name="Fletcher C.F."/>
            <person name="Fukushima T."/>
            <person name="Furuno M."/>
            <person name="Futaki S."/>
            <person name="Gariboldi M."/>
            <person name="Georgii-Hemming P."/>
            <person name="Gingeras T.R."/>
            <person name="Gojobori T."/>
            <person name="Green R.E."/>
            <person name="Gustincich S."/>
            <person name="Harbers M."/>
            <person name="Hayashi Y."/>
            <person name="Hensch T.K."/>
            <person name="Hirokawa N."/>
            <person name="Hill D."/>
            <person name="Huminiecki L."/>
            <person name="Iacono M."/>
            <person name="Ikeo K."/>
            <person name="Iwama A."/>
            <person name="Ishikawa T."/>
            <person name="Jakt M."/>
            <person name="Kanapin A."/>
            <person name="Katoh M."/>
            <person name="Kawasawa Y."/>
            <person name="Kelso J."/>
            <person name="Kitamura H."/>
            <person name="Kitano H."/>
            <person name="Kollias G."/>
            <person name="Krishnan S.P."/>
            <person name="Kruger A."/>
            <person name="Kummerfeld S.K."/>
            <person name="Kurochkin I.V."/>
            <person name="Lareau L.F."/>
            <person name="Lazarevic D."/>
            <person name="Lipovich L."/>
            <person name="Liu J."/>
            <person name="Liuni S."/>
            <person name="McWilliam S."/>
            <person name="Madan Babu M."/>
            <person name="Madera M."/>
            <person name="Marchionni L."/>
            <person name="Matsuda H."/>
            <person name="Matsuzawa S."/>
            <person name="Miki H."/>
            <person name="Mignone F."/>
            <person name="Miyake S."/>
            <person name="Morris K."/>
            <person name="Mottagui-Tabar S."/>
            <person name="Mulder N."/>
            <person name="Nakano N."/>
            <person name="Nakauchi H."/>
            <person name="Ng P."/>
            <person name="Nilsson R."/>
            <person name="Nishiguchi S."/>
            <person name="Nishikawa S."/>
            <person name="Nori F."/>
            <person name="Ohara O."/>
            <person name="Okazaki Y."/>
            <person name="Orlando V."/>
            <person name="Pang K.C."/>
            <person name="Pavan W.J."/>
            <person name="Pavesi G."/>
            <person name="Pesole G."/>
            <person name="Petrovsky N."/>
            <person name="Piazza S."/>
            <person name="Reed J."/>
            <person name="Reid J.F."/>
            <person name="Ring B.Z."/>
            <person name="Ringwald M."/>
            <person name="Rost B."/>
            <person name="Ruan Y."/>
            <person name="Salzberg S.L."/>
            <person name="Sandelin A."/>
            <person name="Schneider C."/>
            <person name="Schoenbach C."/>
            <person name="Sekiguchi K."/>
            <person name="Semple C.A."/>
            <person name="Seno S."/>
            <person name="Sessa L."/>
            <person name="Sheng Y."/>
            <person name="Shibata Y."/>
            <person name="Shimada H."/>
            <person name="Shimada K."/>
            <person name="Silva D."/>
            <person name="Sinclair B."/>
            <person name="Sperling S."/>
            <person name="Stupka E."/>
            <person name="Sugiura K."/>
            <person name="Sultana R."/>
            <person name="Takenaka Y."/>
            <person name="Taki K."/>
            <person name="Tammoja K."/>
            <person name="Tan S.L."/>
            <person name="Tang S."/>
            <person name="Taylor M.S."/>
            <person name="Tegner J."/>
            <person name="Teichmann S.A."/>
            <person name="Ueda H.R."/>
            <person name="van Nimwegen E."/>
            <person name="Verardo R."/>
            <person name="Wei C.L."/>
            <person name="Yagi K."/>
            <person name="Yamanishi H."/>
            <person name="Zabarovsky E."/>
            <person name="Zhu S."/>
            <person name="Zimmer A."/>
            <person name="Hide W."/>
            <person name="Bult C."/>
            <person name="Grimmond S.M."/>
            <person name="Teasdale R.D."/>
            <person name="Liu E.T."/>
            <person name="Brusic V."/>
            <person name="Quackenbush J."/>
            <person name="Wahlestedt C."/>
            <person name="Mattick J.S."/>
            <person name="Hume D.A."/>
            <person name="Kai C."/>
            <person name="Sasaki D."/>
            <person name="Tomaru Y."/>
            <person name="Fukuda S."/>
            <person name="Kanamori-Katayama M."/>
            <person name="Suzuki M."/>
            <person name="Aoki J."/>
            <person name="Arakawa T."/>
            <person name="Iida J."/>
            <person name="Imamura K."/>
            <person name="Itoh M."/>
            <person name="Kato T."/>
            <person name="Kawaji H."/>
            <person name="Kawagashira N."/>
            <person name="Kawashima T."/>
            <person name="Kojima M."/>
            <person name="Kondo S."/>
            <person name="Konno H."/>
            <person name="Nakano K."/>
            <person name="Ninomiya N."/>
            <person name="Nishio T."/>
            <person name="Okada M."/>
            <person name="Plessy C."/>
            <person name="Shibata K."/>
            <person name="Shiraki T."/>
            <person name="Suzuki S."/>
            <person name="Tagami M."/>
            <person name="Waki K."/>
            <person name="Watahiki A."/>
            <person name="Okamura-Oho Y."/>
            <person name="Suzuki H."/>
            <person name="Kawai J."/>
            <person name="Hayashizaki Y."/>
        </authorList>
    </citation>
    <scope>NUCLEOTIDE SEQUENCE [LARGE SCALE MRNA]</scope>
    <source>
        <strain>C57BL/6J</strain>
        <tissue>Egg</tissue>
    </source>
</reference>
<reference key="6">
    <citation type="journal article" date="2009" name="PLoS Biol.">
        <title>Lineage-specific biology revealed by a finished genome assembly of the mouse.</title>
        <authorList>
            <person name="Church D.M."/>
            <person name="Goodstadt L."/>
            <person name="Hillier L.W."/>
            <person name="Zody M.C."/>
            <person name="Goldstein S."/>
            <person name="She X."/>
            <person name="Bult C.J."/>
            <person name="Agarwala R."/>
            <person name="Cherry J.L."/>
            <person name="DiCuccio M."/>
            <person name="Hlavina W."/>
            <person name="Kapustin Y."/>
            <person name="Meric P."/>
            <person name="Maglott D."/>
            <person name="Birtle Z."/>
            <person name="Marques A.C."/>
            <person name="Graves T."/>
            <person name="Zhou S."/>
            <person name="Teague B."/>
            <person name="Potamousis K."/>
            <person name="Churas C."/>
            <person name="Place M."/>
            <person name="Herschleb J."/>
            <person name="Runnheim R."/>
            <person name="Forrest D."/>
            <person name="Amos-Landgraf J."/>
            <person name="Schwartz D.C."/>
            <person name="Cheng Z."/>
            <person name="Lindblad-Toh K."/>
            <person name="Eichler E.E."/>
            <person name="Ponting C.P."/>
        </authorList>
    </citation>
    <scope>NUCLEOTIDE SEQUENCE [LARGE SCALE GENOMIC DNA]</scope>
    <source>
        <strain>C57BL/6J</strain>
    </source>
</reference>
<reference key="7">
    <citation type="journal article" date="2004" name="Genome Res.">
        <title>The status, quality, and expansion of the NIH full-length cDNA project: the Mammalian Gene Collection (MGC).</title>
        <authorList>
            <consortium name="The MGC Project Team"/>
        </authorList>
    </citation>
    <scope>NUCLEOTIDE SEQUENCE [LARGE SCALE MRNA]</scope>
    <source>
        <tissue>Oocyte</tissue>
    </source>
</reference>
<reference key="8">
    <citation type="journal article" date="2003" name="Curr. Biol.">
        <title>Stella is a maternal effect gene required for normal early development in mice.</title>
        <authorList>
            <person name="Payer B."/>
            <person name="Saitou M."/>
            <person name="Barton S.C."/>
            <person name="Thresher R."/>
            <person name="Dixon J.P."/>
            <person name="Zahn D."/>
            <person name="Colledge W.H."/>
            <person name="Carlton M.B."/>
            <person name="Nakano T."/>
            <person name="Surani M.A."/>
        </authorList>
    </citation>
    <scope>FUNCTION</scope>
    <scope>DISRUPTION PHENOTYPE</scope>
    <scope>DEVELOPMENTAL STAGE</scope>
</reference>
<reference key="9">
    <citation type="journal article" date="2003" name="Cytogenet. Genome Res.">
        <title>Dppa3 is a marker of pluripotency and has a human homologue that is expressed in germ cell tumours.</title>
        <authorList>
            <person name="Bowles J."/>
            <person name="Teasdale R.P."/>
            <person name="James K."/>
            <person name="Koopman P."/>
        </authorList>
    </citation>
    <scope>DEVELOPMENTAL STAGE</scope>
</reference>
<reference key="10">
    <citation type="journal article" date="2004" name="BMC Dev. Biol.">
        <title>Dppa3 / Pgc7 / stella is a maternal factor and is not required for germ cell specification in mice.</title>
        <authorList>
            <person name="Bortvin A."/>
            <person name="Goodheart M."/>
            <person name="Liao M."/>
            <person name="Page D.C."/>
        </authorList>
    </citation>
    <scope>DISRUPTION PHENOTYPE</scope>
</reference>
<reference key="11">
    <citation type="journal article" date="2007" name="Nat. Cell Biol.">
        <title>PGC7/Stella protects against DNA demethylation in early embryogenesis.</title>
        <authorList>
            <person name="Nakamura T."/>
            <person name="Arai Y."/>
            <person name="Umehara H."/>
            <person name="Masuhara M."/>
            <person name="Kimura T."/>
            <person name="Taniguchi H."/>
            <person name="Sekimoto T."/>
            <person name="Ikawa M."/>
            <person name="Yoneda Y."/>
            <person name="Okabe M."/>
            <person name="Tanaka S."/>
            <person name="Shiota K."/>
            <person name="Nakano T."/>
        </authorList>
    </citation>
    <scope>FUNCTION</scope>
    <scope>SUBCELLULAR LOCATION</scope>
    <scope>DISRUPTION PHENOTYPE</scope>
    <scope>MUTAGENESIS OF LEU-44 AND LEU-46</scope>
</reference>
<reference key="12">
    <citation type="journal article" date="2011" name="Nat. Commun.">
        <title>5-Hydroxymethylcytosine in the mammalian zygote is linked with epigenetic reprogramming.</title>
        <authorList>
            <person name="Wossidlo M."/>
            <person name="Nakamura T."/>
            <person name="Lepikhov K."/>
            <person name="Marques C.J."/>
            <person name="Zakhartchenko V."/>
            <person name="Boiani M."/>
            <person name="Arand J."/>
            <person name="Nakano T."/>
            <person name="Reik W."/>
            <person name="Walter J."/>
        </authorList>
    </citation>
    <scope>FUNCTION</scope>
</reference>
<reference key="13">
    <citation type="journal article" date="2012" name="Biol. Reprod.">
        <title>Essential role of DPPA3 for chromatin condensation in mouse oocytogenesis.</title>
        <authorList>
            <person name="Liu Y.J."/>
            <person name="Nakamura T."/>
            <person name="Nakano T."/>
        </authorList>
    </citation>
    <scope>FUNCTION</scope>
</reference>
<reference key="14">
    <citation type="journal article" date="2012" name="Nature">
        <title>PGC7 binds histone H3K9me2 to protect against conversion of 5mC to 5hmC in early embryos.</title>
        <authorList>
            <person name="Nakamura T."/>
            <person name="Liu Y.J."/>
            <person name="Nakashima H."/>
            <person name="Umehara H."/>
            <person name="Inoue K."/>
            <person name="Matoba S."/>
            <person name="Tachibana M."/>
            <person name="Ogura A."/>
            <person name="Shinkai Y."/>
            <person name="Nakano T."/>
        </authorList>
    </citation>
    <scope>FUNCTION</scope>
    <scope>H3K9ME2 METHYLATED HISTONE-BINDING</scope>
    <scope>SUBCELLULAR LOCATION</scope>
</reference>
<proteinExistence type="evidence at protein level"/>
<protein>
    <recommendedName>
        <fullName>Developmental pluripotency-associated protein 3</fullName>
    </recommendedName>
    <alternativeName>
        <fullName>Compaction-associated protein 1</fullName>
    </alternativeName>
    <alternativeName>
        <fullName evidence="12">Primordial germ cell protein 7</fullName>
    </alternativeName>
    <alternativeName>
        <fullName evidence="13">Stella</fullName>
    </alternativeName>
</protein>
<accession>Q8QZY3</accession>
<accession>F6S6F5</accession>
<keyword id="KW-0002">3D-structure</keyword>
<keyword id="KW-0156">Chromatin regulator</keyword>
<keyword id="KW-0963">Cytoplasm</keyword>
<keyword id="KW-0217">Developmental protein</keyword>
<keyword id="KW-0539">Nucleus</keyword>
<keyword id="KW-1185">Reference proteome</keyword>
<sequence>MEEPSEKVDPMKDPETPQKKDEEDALDDTDVLQPETLVKVMKKLTLNPGVKRSARRRSLRNRIAAVPVENKSEKIRREVQSAFPKRRVRTLLSVLKDPIAKMRRLVRIEQRQKRLEGNEFERDSEPFRCLCTFCHYQRWDPSENAKIGKN</sequence>
<feature type="chain" id="PRO_0000239266" description="Developmental pluripotency-associated protein 3">
    <location>
        <begin position="1"/>
        <end position="150"/>
    </location>
</feature>
<feature type="region of interest" description="Required for H3K9me2-binding">
    <location>
        <begin position="1"/>
        <end position="75"/>
    </location>
</feature>
<feature type="region of interest" description="Disordered" evidence="1">
    <location>
        <begin position="1"/>
        <end position="32"/>
    </location>
</feature>
<feature type="region of interest" description="Required to exclude TET3 from the maternal pronucleus">
    <location>
        <begin position="76"/>
        <end position="150"/>
    </location>
</feature>
<feature type="compositionally biased region" description="Basic and acidic residues" evidence="1">
    <location>
        <begin position="1"/>
        <end position="22"/>
    </location>
</feature>
<feature type="mutagenesis site" description="Abolishes localization to the nucleus and ability to prevent DNA demethylation; when associated with A-46." evidence="8">
    <original>L</original>
    <variation>A</variation>
    <location>
        <position position="44"/>
    </location>
</feature>
<feature type="mutagenesis site" description="Abolishes localization to the nucleus and ability to prevent DNA demethylation; when associated with A-44." evidence="8">
    <original>L</original>
    <variation>A</variation>
    <location>
        <position position="46"/>
    </location>
</feature>
<feature type="helix" evidence="14">
    <location>
        <begin position="91"/>
        <end position="95"/>
    </location>
</feature>
<feature type="helix" evidence="14">
    <location>
        <begin position="98"/>
        <end position="112"/>
    </location>
</feature>
<gene>
    <name type="primary">Dppa3</name>
    <name type="synonym">Cap1p</name>
    <name type="synonym">Crg1</name>
    <name evidence="12" type="synonym">Pgc7</name>
</gene>
<comment type="function">
    <text evidence="3 4 5 8 9 10 11">Primordial germ cell (PGCs)-specific protein involved in epigenetic chromatin reprogramming in the zygote following fertilization. In zygotes, DNA demethylation occurs selectively in the paternal pronucleus before the first cell division, while the adjacent maternal pronucleus and certain paternally-imprinted loci are protected from this process. Participates in protection of DNA methylation in the maternal pronucleus by preventing conversion of 5mC to 5hmC: specifically recognizes and binds histone H3 dimethylated at 'Lys-9' (H3K9me2) on maternal genome, and protects maternal genome from TET3-mediated conversion to 5hmC and subsequent DNA demethylation. Does not bind paternal chromatin, which is mainly packed into protamine and does not contain much H3K9me2 mark. Also protects imprinted loci that are marked with H3K9me2 in mature sperm from DNA demethylation in early embryogenesis. May be important for the totipotent/pluripotent states continuing through preimplantation development. Also involved in chromatin condensation in oocytogenesis.</text>
</comment>
<comment type="subcellular location">
    <subcellularLocation>
        <location evidence="2 3 8 11">Nucleus</location>
    </subcellularLocation>
    <subcellularLocation>
        <location evidence="2 3 8">Cytoplasm</location>
    </subcellularLocation>
    <text evidence="11">Localized in the cytoplasm at the primary oocyte stage and in oocytes within mono-laminar follicles. Expressed in the nucleus and cytoplasm of oocytes in bi-laminar and Graafian follicles and during the 2-cell and morula stages. In 3.5 dpc blastocysts localization is mainly nuclear. Mainly localizes in the female pronucleus, localization to the male pronucleus in much weaker.</text>
</comment>
<comment type="tissue specificity">
    <text evidence="2 3 4">Expressed in the immature oocytes and in newborn ovaries. Subsequently detected in maturing oocytes and in preimplantation embryos. Expressed in pluripotent embryonic but not in differentiated somatic cells. Expressed in blastocysts, epiblasts, primordial germ cells, embryonic gonads and primitive spermatogonia. No expression is detected in adult testes.</text>
</comment>
<comment type="developmental stage">
    <text evidence="2 4 5 6">Detected at 3.5 dpc (at protein level). Activated during the process of germ cell specification at 7 dpc.25, specifically in the founder population of lineage-restricted primordial germ cells (PGCs). Thereafter, expressed in the germ line until about 15.5 dpc in male and 13.5 dpc in female gonads. Expressed during blastocyst, morula and 4-cell embryo stages.</text>
</comment>
<comment type="domain">
    <text evidence="11">Mediates binding to H3K9me2 via N-terminal region, while ability to exclude TET3 from the maternal pronucleus requires the C-terminal part.</text>
</comment>
<comment type="disruption phenotype">
    <text evidence="5 7 8">Null mutation result in apparently normal offspring. No effect on early gonadal PGCs or gross abnormalities in the development of gametes. However, females display severely reduced fertility despite ovulation of normal numbers of oocytes. Null mutation resulted in preimplantation development failure. Embryos rarely reached the blastocyst stage.</text>
</comment>